<gene>
    <name evidence="1" type="primary">arnF</name>
    <name type="ordered locus">KPK_0273</name>
</gene>
<protein>
    <recommendedName>
        <fullName evidence="1">Probable 4-amino-4-deoxy-L-arabinose-phosphoundecaprenol flippase subunit ArnF</fullName>
        <shortName evidence="1">L-Ara4N-phosphoundecaprenol flippase subunit ArnF</shortName>
    </recommendedName>
    <alternativeName>
        <fullName evidence="1">Undecaprenyl phosphate-aminoarabinose flippase subunit ArnF</fullName>
    </alternativeName>
</protein>
<sequence length="126" mass="14188">MGFLWALFSVGLVSAAQLLLRSAMVALPPLTDIVAFLQHLLHFQPGTVGLFFGLLGYLLSMVCWYFALHRLPLSKAYALLSLSYILVWAAAIWLPGWHEPFYWQSLLGVTIIVAGVLTIFWPVKRR</sequence>
<evidence type="ECO:0000255" key="1">
    <source>
        <dbReference type="HAMAP-Rule" id="MF_00538"/>
    </source>
</evidence>
<name>ARNF_KLEP3</name>
<reference key="1">
    <citation type="journal article" date="2008" name="PLoS Genet.">
        <title>Complete genome sequence of the N2-fixing broad host range endophyte Klebsiella pneumoniae 342 and virulence predictions verified in mice.</title>
        <authorList>
            <person name="Fouts D.E."/>
            <person name="Tyler H.L."/>
            <person name="DeBoy R.T."/>
            <person name="Daugherty S."/>
            <person name="Ren Q."/>
            <person name="Badger J.H."/>
            <person name="Durkin A.S."/>
            <person name="Huot H."/>
            <person name="Shrivastava S."/>
            <person name="Kothari S."/>
            <person name="Dodson R.J."/>
            <person name="Mohamoud Y."/>
            <person name="Khouri H."/>
            <person name="Roesch L.F.W."/>
            <person name="Krogfelt K.A."/>
            <person name="Struve C."/>
            <person name="Triplett E.W."/>
            <person name="Methe B.A."/>
        </authorList>
    </citation>
    <scope>NUCLEOTIDE SEQUENCE [LARGE SCALE GENOMIC DNA]</scope>
    <source>
        <strain>342</strain>
    </source>
</reference>
<comment type="function">
    <text evidence="1">Translocates 4-amino-4-deoxy-L-arabinose-phosphoundecaprenol (alpha-L-Ara4N-phosphoundecaprenol) from the cytoplasmic to the periplasmic side of the inner membrane.</text>
</comment>
<comment type="pathway">
    <text evidence="1">Bacterial outer membrane biogenesis; lipopolysaccharide biosynthesis.</text>
</comment>
<comment type="subunit">
    <text evidence="1">Heterodimer of ArnE and ArnF.</text>
</comment>
<comment type="subcellular location">
    <subcellularLocation>
        <location evidence="1">Cell inner membrane</location>
        <topology evidence="1">Multi-pass membrane protein</topology>
    </subcellularLocation>
</comment>
<comment type="similarity">
    <text evidence="1">Belongs to the ArnF family.</text>
</comment>
<accession>B5XTL3</accession>
<dbReference type="EMBL" id="CP000964">
    <property type="protein sequence ID" value="ACI10235.1"/>
    <property type="molecule type" value="Genomic_DNA"/>
</dbReference>
<dbReference type="KEGG" id="kpe:KPK_0273"/>
<dbReference type="HOGENOM" id="CLU_131462_1_0_6"/>
<dbReference type="UniPathway" id="UPA00030"/>
<dbReference type="Proteomes" id="UP000001734">
    <property type="component" value="Chromosome"/>
</dbReference>
<dbReference type="GO" id="GO:0005886">
    <property type="term" value="C:plasma membrane"/>
    <property type="evidence" value="ECO:0007669"/>
    <property type="project" value="UniProtKB-SubCell"/>
</dbReference>
<dbReference type="GO" id="GO:1901505">
    <property type="term" value="F:carbohydrate derivative transmembrane transporter activity"/>
    <property type="evidence" value="ECO:0007669"/>
    <property type="project" value="InterPro"/>
</dbReference>
<dbReference type="GO" id="GO:0009245">
    <property type="term" value="P:lipid A biosynthetic process"/>
    <property type="evidence" value="ECO:0007669"/>
    <property type="project" value="UniProtKB-UniRule"/>
</dbReference>
<dbReference type="GO" id="GO:0009103">
    <property type="term" value="P:lipopolysaccharide biosynthetic process"/>
    <property type="evidence" value="ECO:0007669"/>
    <property type="project" value="UniProtKB-UniRule"/>
</dbReference>
<dbReference type="Gene3D" id="1.10.3730.20">
    <property type="match status" value="1"/>
</dbReference>
<dbReference type="HAMAP" id="MF_00538">
    <property type="entry name" value="Flippase_ArnF"/>
    <property type="match status" value="1"/>
</dbReference>
<dbReference type="InterPro" id="IPR022832">
    <property type="entry name" value="Flippase_ArnF"/>
</dbReference>
<dbReference type="InterPro" id="IPR000390">
    <property type="entry name" value="Small_drug/metabolite_transptr"/>
</dbReference>
<dbReference type="NCBIfam" id="NF002816">
    <property type="entry name" value="PRK02971.1-2"/>
    <property type="match status" value="1"/>
</dbReference>
<dbReference type="PANTHER" id="PTHR30561:SF9">
    <property type="entry name" value="4-AMINO-4-DEOXY-L-ARABINOSE-PHOSPHOUNDECAPRENOL FLIPPASE SUBUNIT ARNF-RELATED"/>
    <property type="match status" value="1"/>
</dbReference>
<dbReference type="PANTHER" id="PTHR30561">
    <property type="entry name" value="SMR FAMILY PROTON-DEPENDENT DRUG EFFLUX TRANSPORTER SUGE"/>
    <property type="match status" value="1"/>
</dbReference>
<dbReference type="SUPFAM" id="SSF103481">
    <property type="entry name" value="Multidrug resistance efflux transporter EmrE"/>
    <property type="match status" value="1"/>
</dbReference>
<feature type="chain" id="PRO_0000382006" description="Probable 4-amino-4-deoxy-L-arabinose-phosphoundecaprenol flippase subunit ArnF">
    <location>
        <begin position="1"/>
        <end position="126"/>
    </location>
</feature>
<feature type="transmembrane region" description="Helical" evidence="1">
    <location>
        <begin position="1"/>
        <end position="21"/>
    </location>
</feature>
<feature type="topological domain" description="Periplasmic" evidence="1">
    <location>
        <begin position="22"/>
        <end position="47"/>
    </location>
</feature>
<feature type="transmembrane region" description="Helical" evidence="1">
    <location>
        <begin position="48"/>
        <end position="68"/>
    </location>
</feature>
<feature type="topological domain" description="Cytoplasmic" evidence="1">
    <location>
        <begin position="69"/>
        <end position="76"/>
    </location>
</feature>
<feature type="transmembrane region" description="Helical" evidence="1">
    <location>
        <begin position="77"/>
        <end position="97"/>
    </location>
</feature>
<feature type="topological domain" description="Periplasmic" evidence="1">
    <location>
        <begin position="98"/>
        <end position="100"/>
    </location>
</feature>
<feature type="transmembrane region" description="Helical" evidence="1">
    <location>
        <begin position="101"/>
        <end position="121"/>
    </location>
</feature>
<feature type="topological domain" description="Cytoplasmic" evidence="1">
    <location>
        <begin position="122"/>
        <end position="126"/>
    </location>
</feature>
<organism>
    <name type="scientific">Klebsiella pneumoniae (strain 342)</name>
    <dbReference type="NCBI Taxonomy" id="507522"/>
    <lineage>
        <taxon>Bacteria</taxon>
        <taxon>Pseudomonadati</taxon>
        <taxon>Pseudomonadota</taxon>
        <taxon>Gammaproteobacteria</taxon>
        <taxon>Enterobacterales</taxon>
        <taxon>Enterobacteriaceae</taxon>
        <taxon>Klebsiella/Raoultella group</taxon>
        <taxon>Klebsiella</taxon>
        <taxon>Klebsiella pneumoniae complex</taxon>
    </lineage>
</organism>
<keyword id="KW-0997">Cell inner membrane</keyword>
<keyword id="KW-1003">Cell membrane</keyword>
<keyword id="KW-0441">Lipid A biosynthesis</keyword>
<keyword id="KW-0444">Lipid biosynthesis</keyword>
<keyword id="KW-0443">Lipid metabolism</keyword>
<keyword id="KW-0448">Lipopolysaccharide biosynthesis</keyword>
<keyword id="KW-0472">Membrane</keyword>
<keyword id="KW-0812">Transmembrane</keyword>
<keyword id="KW-1133">Transmembrane helix</keyword>
<keyword id="KW-0813">Transport</keyword>
<proteinExistence type="inferred from homology"/>